<protein>
    <recommendedName>
        <fullName evidence="2">Large ribosomal subunit protein uL23c</fullName>
    </recommendedName>
    <alternativeName>
        <fullName>50S ribosomal protein L23, chloroplastic</fullName>
    </alternativeName>
</protein>
<comment type="function">
    <text evidence="1">Binds to 23S rRNA.</text>
</comment>
<comment type="subunit">
    <text evidence="1">Part of the 50S ribosomal subunit.</text>
</comment>
<comment type="subcellular location">
    <subcellularLocation>
        <location>Plastid</location>
        <location>Chloroplast</location>
    </subcellularLocation>
</comment>
<comment type="similarity">
    <text evidence="2">Belongs to the universal ribosomal protein uL23 family.</text>
</comment>
<evidence type="ECO:0000250" key="1"/>
<evidence type="ECO:0000305" key="2"/>
<dbReference type="EMBL" id="D17510">
    <property type="protein sequence ID" value="BAA04408.1"/>
    <property type="molecule type" value="Genomic_DNA"/>
</dbReference>
<dbReference type="PIR" id="T07532">
    <property type="entry name" value="T07532"/>
</dbReference>
<dbReference type="RefSeq" id="NP_042453.1">
    <property type="nucleotide sequence ID" value="NC_001631.1"/>
</dbReference>
<dbReference type="SMR" id="P52772"/>
<dbReference type="GeneID" id="809053"/>
<dbReference type="GO" id="GO:0009507">
    <property type="term" value="C:chloroplast"/>
    <property type="evidence" value="ECO:0007669"/>
    <property type="project" value="UniProtKB-SubCell"/>
</dbReference>
<dbReference type="GO" id="GO:1990904">
    <property type="term" value="C:ribonucleoprotein complex"/>
    <property type="evidence" value="ECO:0007669"/>
    <property type="project" value="UniProtKB-KW"/>
</dbReference>
<dbReference type="GO" id="GO:0005840">
    <property type="term" value="C:ribosome"/>
    <property type="evidence" value="ECO:0007669"/>
    <property type="project" value="UniProtKB-KW"/>
</dbReference>
<dbReference type="GO" id="GO:0019843">
    <property type="term" value="F:rRNA binding"/>
    <property type="evidence" value="ECO:0007669"/>
    <property type="project" value="UniProtKB-UniRule"/>
</dbReference>
<dbReference type="GO" id="GO:0003735">
    <property type="term" value="F:structural constituent of ribosome"/>
    <property type="evidence" value="ECO:0007669"/>
    <property type="project" value="InterPro"/>
</dbReference>
<dbReference type="GO" id="GO:0006412">
    <property type="term" value="P:translation"/>
    <property type="evidence" value="ECO:0007669"/>
    <property type="project" value="UniProtKB-UniRule"/>
</dbReference>
<dbReference type="Gene3D" id="3.30.70.330">
    <property type="match status" value="1"/>
</dbReference>
<dbReference type="HAMAP" id="MF_01369_B">
    <property type="entry name" value="Ribosomal_uL23_B"/>
    <property type="match status" value="1"/>
</dbReference>
<dbReference type="InterPro" id="IPR012677">
    <property type="entry name" value="Nucleotide-bd_a/b_plait_sf"/>
</dbReference>
<dbReference type="InterPro" id="IPR013025">
    <property type="entry name" value="Ribosomal_uL23-like"/>
</dbReference>
<dbReference type="InterPro" id="IPR012678">
    <property type="entry name" value="Ribosomal_uL23/eL15/eS24_sf"/>
</dbReference>
<dbReference type="PANTHER" id="PTHR11620">
    <property type="entry name" value="60S RIBOSOMAL PROTEIN L23A"/>
    <property type="match status" value="1"/>
</dbReference>
<dbReference type="Pfam" id="PF00276">
    <property type="entry name" value="Ribosomal_L23"/>
    <property type="match status" value="1"/>
</dbReference>
<dbReference type="SUPFAM" id="SSF54189">
    <property type="entry name" value="Ribosomal proteins S24e, L23 and L15e"/>
    <property type="match status" value="1"/>
</dbReference>
<organism>
    <name type="scientific">Pinus thunbergii</name>
    <name type="common">Japanese black pine</name>
    <name type="synonym">Pinus thunbergiana</name>
    <dbReference type="NCBI Taxonomy" id="3350"/>
    <lineage>
        <taxon>Eukaryota</taxon>
        <taxon>Viridiplantae</taxon>
        <taxon>Streptophyta</taxon>
        <taxon>Embryophyta</taxon>
        <taxon>Tracheophyta</taxon>
        <taxon>Spermatophyta</taxon>
        <taxon>Pinopsida</taxon>
        <taxon>Pinidae</taxon>
        <taxon>Conifers I</taxon>
        <taxon>Pinales</taxon>
        <taxon>Pinaceae</taxon>
        <taxon>Pinus</taxon>
        <taxon>Pinus subgen. Pinus</taxon>
    </lineage>
</organism>
<gene>
    <name type="primary">rpl23</name>
</gene>
<sequence>MDEVKYPVLTEKSIRLLERNQYTFNVDSQSNKTKIKNWIENFFDVKVIAMNSYRLPEKGGKRVSMIGHPIRCKRVIITLRTGDSIPLFSEQ</sequence>
<keyword id="KW-0150">Chloroplast</keyword>
<keyword id="KW-0934">Plastid</keyword>
<keyword id="KW-0687">Ribonucleoprotein</keyword>
<keyword id="KW-0689">Ribosomal protein</keyword>
<keyword id="KW-0694">RNA-binding</keyword>
<keyword id="KW-0699">rRNA-binding</keyword>
<geneLocation type="chloroplast"/>
<name>RK23_PINTH</name>
<feature type="chain" id="PRO_0000129461" description="Large ribosomal subunit protein uL23c">
    <location>
        <begin position="1"/>
        <end position="91"/>
    </location>
</feature>
<accession>P52772</accession>
<proteinExistence type="inferred from homology"/>
<reference key="1">
    <citation type="journal article" date="1994" name="Proc. Natl. Acad. Sci. U.S.A.">
        <title>Loss of all ndh genes as determined by sequencing the entire chloroplast genome of the black pine Pinus thunbergii.</title>
        <authorList>
            <person name="Wakasugi T."/>
            <person name="Tsudzuki J."/>
            <person name="Ito S."/>
            <person name="Nakashima K."/>
            <person name="Tsudzuki T."/>
            <person name="Sugiura M."/>
        </authorList>
    </citation>
    <scope>NUCLEOTIDE SEQUENCE [LARGE SCALE GENOMIC DNA]</scope>
</reference>